<organism>
    <name type="scientific">Caenorhabditis elegans</name>
    <dbReference type="NCBI Taxonomy" id="6239"/>
    <lineage>
        <taxon>Eukaryota</taxon>
        <taxon>Metazoa</taxon>
        <taxon>Ecdysozoa</taxon>
        <taxon>Nematoda</taxon>
        <taxon>Chromadorea</taxon>
        <taxon>Rhabditida</taxon>
        <taxon>Rhabditina</taxon>
        <taxon>Rhabditomorpha</taxon>
        <taxon>Rhabditoidea</taxon>
        <taxon>Rhabditidae</taxon>
        <taxon>Peloderinae</taxon>
        <taxon>Caenorhabditis</taxon>
    </lineage>
</organism>
<name>ERH_CAEEL</name>
<gene>
    <name evidence="3" type="primary">erh-1</name>
    <name evidence="3" type="ORF">T21C9.4</name>
</gene>
<protein>
    <recommendedName>
        <fullName>Enhancer of rudimentary homolog</fullName>
    </recommendedName>
</protein>
<comment type="function">
    <text evidence="1">May have a role in the cell cycle.</text>
</comment>
<comment type="subunit">
    <text evidence="1">Homodimer.</text>
</comment>
<comment type="interaction">
    <interactant intactId="EBI-328101">
        <id>Q22640</id>
    </interactant>
    <interactant intactId="EBI-328101">
        <id>Q22640</id>
        <label>erh-1</label>
    </interactant>
    <organismsDiffer>false</organismsDiffer>
    <experiments>3</experiments>
</comment>
<comment type="similarity">
    <text evidence="2">Belongs to the E(R) family.</text>
</comment>
<dbReference type="EMBL" id="BX284605">
    <property type="protein sequence ID" value="CAA97332.1"/>
    <property type="molecule type" value="Genomic_DNA"/>
</dbReference>
<dbReference type="PIR" id="T25069">
    <property type="entry name" value="T25069"/>
</dbReference>
<dbReference type="RefSeq" id="NP_505713.1">
    <property type="nucleotide sequence ID" value="NM_073312.6"/>
</dbReference>
<dbReference type="SMR" id="Q22640"/>
<dbReference type="BioGRID" id="44505">
    <property type="interactions" value="7"/>
</dbReference>
<dbReference type="DIP" id="DIP-25836N"/>
<dbReference type="FunCoup" id="Q22640">
    <property type="interactions" value="2559"/>
</dbReference>
<dbReference type="IntAct" id="Q22640">
    <property type="interactions" value="4"/>
</dbReference>
<dbReference type="STRING" id="6239.T21C9.4.1"/>
<dbReference type="PaxDb" id="6239-T21C9.4"/>
<dbReference type="PeptideAtlas" id="Q22640"/>
<dbReference type="EnsemblMetazoa" id="T21C9.4.1">
    <property type="protein sequence ID" value="T21C9.4.1"/>
    <property type="gene ID" value="WBGene00011892"/>
</dbReference>
<dbReference type="GeneID" id="179476"/>
<dbReference type="KEGG" id="cel:CELE_T21C9.4"/>
<dbReference type="UCSC" id="T21C9.4">
    <property type="organism name" value="c. elegans"/>
</dbReference>
<dbReference type="AGR" id="WB:WBGene00011892"/>
<dbReference type="CTD" id="179476"/>
<dbReference type="WormBase" id="T21C9.4">
    <property type="protein sequence ID" value="CE06473"/>
    <property type="gene ID" value="WBGene00011892"/>
    <property type="gene designation" value="erh-1"/>
</dbReference>
<dbReference type="eggNOG" id="KOG1766">
    <property type="taxonomic scope" value="Eukaryota"/>
</dbReference>
<dbReference type="GeneTree" id="ENSGT00390000003316"/>
<dbReference type="HOGENOM" id="CLU_125703_1_0_1"/>
<dbReference type="InParanoid" id="Q22640"/>
<dbReference type="OMA" id="VPHNKQY"/>
<dbReference type="OrthoDB" id="7887808at2759"/>
<dbReference type="PhylomeDB" id="Q22640"/>
<dbReference type="PRO" id="PR:Q22640"/>
<dbReference type="Proteomes" id="UP000001940">
    <property type="component" value="Chromosome V"/>
</dbReference>
<dbReference type="Bgee" id="WBGene00011892">
    <property type="expression patterns" value="Expressed in germ line (C elegans) and 4 other cell types or tissues"/>
</dbReference>
<dbReference type="GO" id="GO:0042802">
    <property type="term" value="F:identical protein binding"/>
    <property type="evidence" value="ECO:0000353"/>
    <property type="project" value="IntAct"/>
</dbReference>
<dbReference type="Gene3D" id="3.30.2260.10">
    <property type="entry name" value="Enhancer of rudimentary"/>
    <property type="match status" value="1"/>
</dbReference>
<dbReference type="InterPro" id="IPR035912">
    <property type="entry name" value="EHR_sf"/>
</dbReference>
<dbReference type="InterPro" id="IPR000781">
    <property type="entry name" value="ERH"/>
</dbReference>
<dbReference type="PANTHER" id="PTHR12373">
    <property type="entry name" value="ENHANCER OF RUDIMENTARY ERH"/>
    <property type="match status" value="1"/>
</dbReference>
<dbReference type="PANTHER" id="PTHR12373:SF0">
    <property type="entry name" value="ENHANCER OF RUDIMENTARY HOMOLOG"/>
    <property type="match status" value="1"/>
</dbReference>
<dbReference type="Pfam" id="PF01133">
    <property type="entry name" value="ER"/>
    <property type="match status" value="1"/>
</dbReference>
<dbReference type="PIRSF" id="PIRSF016393">
    <property type="entry name" value="Enh_rudimentary"/>
    <property type="match status" value="1"/>
</dbReference>
<dbReference type="SUPFAM" id="SSF143875">
    <property type="entry name" value="ERH-like"/>
    <property type="match status" value="1"/>
</dbReference>
<dbReference type="PROSITE" id="PS01290">
    <property type="entry name" value="ER"/>
    <property type="match status" value="1"/>
</dbReference>
<sequence>MSHTILLLQPTDNIESRSWSDYENTTECLEGICRVYEEYLKKKVPAQNEITYDISHLFEFIDDLKDLSMLVLDNTTYTYVPHNKQYVKESIYKLMNNRLNNQH</sequence>
<evidence type="ECO:0000250" key="1"/>
<evidence type="ECO:0000305" key="2"/>
<evidence type="ECO:0000312" key="3">
    <source>
        <dbReference type="WormBase" id="T21C9.4"/>
    </source>
</evidence>
<keyword id="KW-0131">Cell cycle</keyword>
<keyword id="KW-1185">Reference proteome</keyword>
<accession>Q22640</accession>
<feature type="chain" id="PRO_0000219354" description="Enhancer of rudimentary homolog">
    <location>
        <begin position="1"/>
        <end position="103"/>
    </location>
</feature>
<reference key="1">
    <citation type="journal article" date="1998" name="Science">
        <title>Genome sequence of the nematode C. elegans: a platform for investigating biology.</title>
        <authorList>
            <consortium name="The C. elegans sequencing consortium"/>
        </authorList>
    </citation>
    <scope>NUCLEOTIDE SEQUENCE [LARGE SCALE GENOMIC DNA]</scope>
    <source>
        <strain>Bristol N2</strain>
    </source>
</reference>
<proteinExistence type="evidence at protein level"/>